<reference key="1">
    <citation type="journal article" date="2008" name="Genomics">
        <title>Characterization of ST-4821 complex, a unique Neisseria meningitidis clone.</title>
        <authorList>
            <person name="Peng J."/>
            <person name="Yang L."/>
            <person name="Yang F."/>
            <person name="Yang J."/>
            <person name="Yan Y."/>
            <person name="Nie H."/>
            <person name="Zhang X."/>
            <person name="Xiong Z."/>
            <person name="Jiang Y."/>
            <person name="Cheng F."/>
            <person name="Xu X."/>
            <person name="Chen S."/>
            <person name="Sun L."/>
            <person name="Li W."/>
            <person name="Shen Y."/>
            <person name="Shao Z."/>
            <person name="Liang X."/>
            <person name="Xu J."/>
            <person name="Jin Q."/>
        </authorList>
    </citation>
    <scope>NUCLEOTIDE SEQUENCE [LARGE SCALE GENOMIC DNA]</scope>
    <source>
        <strain>053442</strain>
    </source>
</reference>
<evidence type="ECO:0000255" key="1">
    <source>
        <dbReference type="HAMAP-Rule" id="MF_00651"/>
    </source>
</evidence>
<organism>
    <name type="scientific">Neisseria meningitidis serogroup C (strain 053442)</name>
    <dbReference type="NCBI Taxonomy" id="374833"/>
    <lineage>
        <taxon>Bacteria</taxon>
        <taxon>Pseudomonadati</taxon>
        <taxon>Pseudomonadota</taxon>
        <taxon>Betaproteobacteria</taxon>
        <taxon>Neisseriales</taxon>
        <taxon>Neisseriaceae</taxon>
        <taxon>Neisseria</taxon>
    </lineage>
</organism>
<protein>
    <recommendedName>
        <fullName evidence="1">Putative pre-16S rRNA nuclease</fullName>
        <ecNumber evidence="1">3.1.-.-</ecNumber>
    </recommendedName>
</protein>
<proteinExistence type="inferred from homology"/>
<dbReference type="EC" id="3.1.-.-" evidence="1"/>
<dbReference type="EMBL" id="CP000381">
    <property type="protein sequence ID" value="ABX73423.1"/>
    <property type="molecule type" value="Genomic_DNA"/>
</dbReference>
<dbReference type="RefSeq" id="WP_012221748.1">
    <property type="nucleotide sequence ID" value="NC_010120.1"/>
</dbReference>
<dbReference type="SMR" id="A9LZR5"/>
<dbReference type="KEGG" id="nmn:NMCC_1250"/>
<dbReference type="HOGENOM" id="CLU_098240_3_2_4"/>
<dbReference type="Proteomes" id="UP000001177">
    <property type="component" value="Chromosome"/>
</dbReference>
<dbReference type="GO" id="GO:0005829">
    <property type="term" value="C:cytosol"/>
    <property type="evidence" value="ECO:0007669"/>
    <property type="project" value="TreeGrafter"/>
</dbReference>
<dbReference type="GO" id="GO:0004518">
    <property type="term" value="F:nuclease activity"/>
    <property type="evidence" value="ECO:0007669"/>
    <property type="project" value="UniProtKB-KW"/>
</dbReference>
<dbReference type="GO" id="GO:0000967">
    <property type="term" value="P:rRNA 5'-end processing"/>
    <property type="evidence" value="ECO:0007669"/>
    <property type="project" value="UniProtKB-UniRule"/>
</dbReference>
<dbReference type="CDD" id="cd16964">
    <property type="entry name" value="YqgF"/>
    <property type="match status" value="1"/>
</dbReference>
<dbReference type="FunFam" id="3.30.420.140:FF:000012">
    <property type="entry name" value="Putative pre-16S rRNA nuclease"/>
    <property type="match status" value="1"/>
</dbReference>
<dbReference type="Gene3D" id="3.30.420.140">
    <property type="entry name" value="YqgF/RNase H-like domain"/>
    <property type="match status" value="1"/>
</dbReference>
<dbReference type="HAMAP" id="MF_00651">
    <property type="entry name" value="Nuclease_YqgF"/>
    <property type="match status" value="1"/>
</dbReference>
<dbReference type="InterPro" id="IPR012337">
    <property type="entry name" value="RNaseH-like_sf"/>
</dbReference>
<dbReference type="InterPro" id="IPR005227">
    <property type="entry name" value="YqgF"/>
</dbReference>
<dbReference type="InterPro" id="IPR006641">
    <property type="entry name" value="YqgF/RNaseH-like_dom"/>
</dbReference>
<dbReference type="InterPro" id="IPR037027">
    <property type="entry name" value="YqgF/RNaseH-like_dom_sf"/>
</dbReference>
<dbReference type="NCBIfam" id="TIGR00250">
    <property type="entry name" value="RNAse_H_YqgF"/>
    <property type="match status" value="1"/>
</dbReference>
<dbReference type="PANTHER" id="PTHR33317">
    <property type="entry name" value="POLYNUCLEOTIDYL TRANSFERASE, RIBONUCLEASE H-LIKE SUPERFAMILY PROTEIN"/>
    <property type="match status" value="1"/>
</dbReference>
<dbReference type="PANTHER" id="PTHR33317:SF4">
    <property type="entry name" value="POLYNUCLEOTIDYL TRANSFERASE, RIBONUCLEASE H-LIKE SUPERFAMILY PROTEIN"/>
    <property type="match status" value="1"/>
</dbReference>
<dbReference type="Pfam" id="PF03652">
    <property type="entry name" value="RuvX"/>
    <property type="match status" value="1"/>
</dbReference>
<dbReference type="SMART" id="SM00732">
    <property type="entry name" value="YqgFc"/>
    <property type="match status" value="1"/>
</dbReference>
<dbReference type="SUPFAM" id="SSF53098">
    <property type="entry name" value="Ribonuclease H-like"/>
    <property type="match status" value="1"/>
</dbReference>
<feature type="chain" id="PRO_1000082750" description="Putative pre-16S rRNA nuclease">
    <location>
        <begin position="1"/>
        <end position="151"/>
    </location>
</feature>
<gene>
    <name type="ordered locus">NMCC_1250</name>
</gene>
<name>YQGF_NEIM0</name>
<keyword id="KW-0963">Cytoplasm</keyword>
<keyword id="KW-0378">Hydrolase</keyword>
<keyword id="KW-0540">Nuclease</keyword>
<keyword id="KW-0690">Ribosome biogenesis</keyword>
<sequence length="151" mass="16588">MHKAPKGTALAFDFGETRIGVAQGDAELGLSHPLSTVTGGSNDEKFAAIAKLVQEWQPRYFVVGLPVHTDGTKHEMTHLSRKFGRRLNGRFNLPVYWVDERLSSVYAESLLSEAQVFGKKRKSVLDQVAAQAILHGFFEGGPAECFNGREG</sequence>
<comment type="function">
    <text evidence="1">Could be a nuclease involved in processing of the 5'-end of pre-16S rRNA.</text>
</comment>
<comment type="subcellular location">
    <subcellularLocation>
        <location evidence="1">Cytoplasm</location>
    </subcellularLocation>
</comment>
<comment type="similarity">
    <text evidence="1">Belongs to the YqgF nuclease family.</text>
</comment>
<accession>A9LZR5</accession>